<accession>Q1XDD9</accession>
<name>SYH_PYRYE</name>
<organism>
    <name type="scientific">Pyropia yezoensis</name>
    <name type="common">Susabi-nori</name>
    <name type="synonym">Porphyra yezoensis</name>
    <dbReference type="NCBI Taxonomy" id="2788"/>
    <lineage>
        <taxon>Eukaryota</taxon>
        <taxon>Rhodophyta</taxon>
        <taxon>Bangiophyceae</taxon>
        <taxon>Bangiales</taxon>
        <taxon>Bangiaceae</taxon>
        <taxon>Pyropia</taxon>
    </lineage>
</organism>
<reference key="1">
    <citation type="submission" date="2003-11" db="EMBL/GenBank/DDBJ databases">
        <title>Whole genome sequence of Porphyra yezoensis chloroplast.</title>
        <authorList>
            <person name="Kunimoto M."/>
            <person name="Morishima K."/>
            <person name="Yoshikawa M."/>
            <person name="Fukuda S."/>
            <person name="Kobayashi T."/>
            <person name="Kobayashi M."/>
            <person name="Okazaki T."/>
            <person name="Ohara I."/>
            <person name="Nakayama I."/>
        </authorList>
    </citation>
    <scope>NUCLEOTIDE SEQUENCE [LARGE SCALE GENOMIC DNA]</scope>
    <source>
        <strain>U-51</strain>
    </source>
</reference>
<sequence>MAKIQAIRGTKDILPDEIQYWQFIHNKISKLLECANYQEIRTPIFENSELYDRGIGEDTDIVNKEMYRFHDRSNRDITLRPEGTAGIVRSFIENKMSYHHSLQRLWYSGPMFRYERPQSGRQRQFHQLGIEFIGSLDARADSEVIHLAMSIFNNLNLHNLKLDLNSIGKVEDRSIYQVKLRDYLTKYHDDLDTDSQKRLTSNPIRILDSKDSNTQKILTEAPKISDFLSLESQQHFGDVCNYLKLLNIPYNINNKLVRGLDYYNDTAFEIKTLTSKGQDTICGGGRYDSLVHQLGGKATPAVGCAIGLERLLLIAKDNIDLPNKSIDFYIATQGTKANETGMQIMRFLHQQFFKIEIDVSSSNFSKQIKQANKKRAVACIIIGSNEIAEGIITIKWLFSQKQENITVVQLKHSVSYLKKKILFYKSSKNY</sequence>
<evidence type="ECO:0000255" key="1">
    <source>
        <dbReference type="HAMAP-Rule" id="MF_00127"/>
    </source>
</evidence>
<comment type="catalytic activity">
    <reaction evidence="1">
        <text>tRNA(His) + L-histidine + ATP = L-histidyl-tRNA(His) + AMP + diphosphate + H(+)</text>
        <dbReference type="Rhea" id="RHEA:17313"/>
        <dbReference type="Rhea" id="RHEA-COMP:9665"/>
        <dbReference type="Rhea" id="RHEA-COMP:9689"/>
        <dbReference type="ChEBI" id="CHEBI:15378"/>
        <dbReference type="ChEBI" id="CHEBI:30616"/>
        <dbReference type="ChEBI" id="CHEBI:33019"/>
        <dbReference type="ChEBI" id="CHEBI:57595"/>
        <dbReference type="ChEBI" id="CHEBI:78442"/>
        <dbReference type="ChEBI" id="CHEBI:78527"/>
        <dbReference type="ChEBI" id="CHEBI:456215"/>
        <dbReference type="EC" id="6.1.1.21"/>
    </reaction>
</comment>
<comment type="subcellular location">
    <subcellularLocation>
        <location>Plastid</location>
        <location>Chloroplast</location>
    </subcellularLocation>
</comment>
<comment type="similarity">
    <text evidence="1">Belongs to the class-II aminoacyl-tRNA synthetase family.</text>
</comment>
<feature type="chain" id="PRO_0000236293" description="Histidine--tRNA ligase, chloroplastic">
    <location>
        <begin position="1"/>
        <end position="430"/>
    </location>
</feature>
<gene>
    <name evidence="1" type="primary">hisS</name>
    <name type="synonym">syh</name>
</gene>
<geneLocation type="chloroplast"/>
<keyword id="KW-0030">Aminoacyl-tRNA synthetase</keyword>
<keyword id="KW-0067">ATP-binding</keyword>
<keyword id="KW-0150">Chloroplast</keyword>
<keyword id="KW-0436">Ligase</keyword>
<keyword id="KW-0547">Nucleotide-binding</keyword>
<keyword id="KW-0934">Plastid</keyword>
<keyword id="KW-0648">Protein biosynthesis</keyword>
<dbReference type="EC" id="6.1.1.21" evidence="1"/>
<dbReference type="EMBL" id="AP006715">
    <property type="protein sequence ID" value="BAE92472.1"/>
    <property type="molecule type" value="Genomic_DNA"/>
</dbReference>
<dbReference type="RefSeq" id="YP_537029.1">
    <property type="nucleotide sequence ID" value="NC_007932.1"/>
</dbReference>
<dbReference type="SMR" id="Q1XDD9"/>
<dbReference type="GeneID" id="3978776"/>
<dbReference type="GO" id="GO:0009507">
    <property type="term" value="C:chloroplast"/>
    <property type="evidence" value="ECO:0007669"/>
    <property type="project" value="UniProtKB-SubCell"/>
</dbReference>
<dbReference type="GO" id="GO:0005524">
    <property type="term" value="F:ATP binding"/>
    <property type="evidence" value="ECO:0007669"/>
    <property type="project" value="UniProtKB-UniRule"/>
</dbReference>
<dbReference type="GO" id="GO:0004821">
    <property type="term" value="F:histidine-tRNA ligase activity"/>
    <property type="evidence" value="ECO:0007669"/>
    <property type="project" value="UniProtKB-UniRule"/>
</dbReference>
<dbReference type="GO" id="GO:0006427">
    <property type="term" value="P:histidyl-tRNA aminoacylation"/>
    <property type="evidence" value="ECO:0007669"/>
    <property type="project" value="UniProtKB-UniRule"/>
</dbReference>
<dbReference type="CDD" id="cd00773">
    <property type="entry name" value="HisRS-like_core"/>
    <property type="match status" value="1"/>
</dbReference>
<dbReference type="CDD" id="cd00859">
    <property type="entry name" value="HisRS_anticodon"/>
    <property type="match status" value="1"/>
</dbReference>
<dbReference type="Gene3D" id="3.40.50.800">
    <property type="entry name" value="Anticodon-binding domain"/>
    <property type="match status" value="1"/>
</dbReference>
<dbReference type="Gene3D" id="3.30.930.10">
    <property type="entry name" value="Bira Bifunctional Protein, Domain 2"/>
    <property type="match status" value="1"/>
</dbReference>
<dbReference type="HAMAP" id="MF_00127">
    <property type="entry name" value="His_tRNA_synth"/>
    <property type="match status" value="1"/>
</dbReference>
<dbReference type="InterPro" id="IPR006195">
    <property type="entry name" value="aa-tRNA-synth_II"/>
</dbReference>
<dbReference type="InterPro" id="IPR045864">
    <property type="entry name" value="aa-tRNA-synth_II/BPL/LPL"/>
</dbReference>
<dbReference type="InterPro" id="IPR004154">
    <property type="entry name" value="Anticodon-bd"/>
</dbReference>
<dbReference type="InterPro" id="IPR036621">
    <property type="entry name" value="Anticodon-bd_dom_sf"/>
</dbReference>
<dbReference type="InterPro" id="IPR015807">
    <property type="entry name" value="His-tRNA-ligase"/>
</dbReference>
<dbReference type="InterPro" id="IPR041715">
    <property type="entry name" value="HisRS-like_core"/>
</dbReference>
<dbReference type="InterPro" id="IPR004516">
    <property type="entry name" value="HisRS/HisZ"/>
</dbReference>
<dbReference type="InterPro" id="IPR033656">
    <property type="entry name" value="HisRS_anticodon"/>
</dbReference>
<dbReference type="NCBIfam" id="TIGR00442">
    <property type="entry name" value="hisS"/>
    <property type="match status" value="1"/>
</dbReference>
<dbReference type="PANTHER" id="PTHR43707:SF1">
    <property type="entry name" value="HISTIDINE--TRNA LIGASE, MITOCHONDRIAL-RELATED"/>
    <property type="match status" value="1"/>
</dbReference>
<dbReference type="PANTHER" id="PTHR43707">
    <property type="entry name" value="HISTIDYL-TRNA SYNTHETASE"/>
    <property type="match status" value="1"/>
</dbReference>
<dbReference type="Pfam" id="PF03129">
    <property type="entry name" value="HGTP_anticodon"/>
    <property type="match status" value="1"/>
</dbReference>
<dbReference type="Pfam" id="PF13393">
    <property type="entry name" value="tRNA-synt_His"/>
    <property type="match status" value="1"/>
</dbReference>
<dbReference type="PIRSF" id="PIRSF001549">
    <property type="entry name" value="His-tRNA_synth"/>
    <property type="match status" value="1"/>
</dbReference>
<dbReference type="SUPFAM" id="SSF52954">
    <property type="entry name" value="Class II aaRS ABD-related"/>
    <property type="match status" value="1"/>
</dbReference>
<dbReference type="SUPFAM" id="SSF55681">
    <property type="entry name" value="Class II aaRS and biotin synthetases"/>
    <property type="match status" value="1"/>
</dbReference>
<dbReference type="PROSITE" id="PS50862">
    <property type="entry name" value="AA_TRNA_LIGASE_II"/>
    <property type="match status" value="1"/>
</dbReference>
<protein>
    <recommendedName>
        <fullName evidence="1">Histidine--tRNA ligase, chloroplastic</fullName>
        <ecNumber evidence="1">6.1.1.21</ecNumber>
    </recommendedName>
    <alternativeName>
        <fullName evidence="1">Histidyl-tRNA synthetase</fullName>
        <shortName evidence="1">HisRS</shortName>
    </alternativeName>
</protein>
<proteinExistence type="inferred from homology"/>